<dbReference type="EMBL" id="CP000243">
    <property type="protein sequence ID" value="ABE05936.1"/>
    <property type="molecule type" value="Genomic_DNA"/>
</dbReference>
<dbReference type="RefSeq" id="WP_000543535.1">
    <property type="nucleotide sequence ID" value="NZ_CP064825.1"/>
</dbReference>
<dbReference type="SMR" id="Q1RFC8"/>
<dbReference type="GeneID" id="93777047"/>
<dbReference type="KEGG" id="eci:UTI89_C0435"/>
<dbReference type="HOGENOM" id="CLU_108412_0_0_6"/>
<dbReference type="Proteomes" id="UP000001952">
    <property type="component" value="Chromosome"/>
</dbReference>
<dbReference type="GO" id="GO:0005524">
    <property type="term" value="F:ATP binding"/>
    <property type="evidence" value="ECO:0007669"/>
    <property type="project" value="UniProtKB-KW"/>
</dbReference>
<dbReference type="GO" id="GO:0003677">
    <property type="term" value="F:DNA binding"/>
    <property type="evidence" value="ECO:0007669"/>
    <property type="project" value="UniProtKB-KW"/>
</dbReference>
<dbReference type="GO" id="GO:0008270">
    <property type="term" value="F:zinc ion binding"/>
    <property type="evidence" value="ECO:0007669"/>
    <property type="project" value="UniProtKB-UniRule"/>
</dbReference>
<dbReference type="GO" id="GO:0045892">
    <property type="term" value="P:negative regulation of DNA-templated transcription"/>
    <property type="evidence" value="ECO:0007669"/>
    <property type="project" value="UniProtKB-UniRule"/>
</dbReference>
<dbReference type="HAMAP" id="MF_00440">
    <property type="entry name" value="NrdR"/>
    <property type="match status" value="1"/>
</dbReference>
<dbReference type="InterPro" id="IPR005144">
    <property type="entry name" value="ATP-cone_dom"/>
</dbReference>
<dbReference type="InterPro" id="IPR055173">
    <property type="entry name" value="NrdR-like_N"/>
</dbReference>
<dbReference type="InterPro" id="IPR003796">
    <property type="entry name" value="RNR_NrdR-like"/>
</dbReference>
<dbReference type="NCBIfam" id="TIGR00244">
    <property type="entry name" value="transcriptional regulator NrdR"/>
    <property type="match status" value="1"/>
</dbReference>
<dbReference type="PANTHER" id="PTHR30455">
    <property type="entry name" value="TRANSCRIPTIONAL REPRESSOR NRDR"/>
    <property type="match status" value="1"/>
</dbReference>
<dbReference type="PANTHER" id="PTHR30455:SF2">
    <property type="entry name" value="TRANSCRIPTIONAL REPRESSOR NRDR"/>
    <property type="match status" value="1"/>
</dbReference>
<dbReference type="Pfam" id="PF03477">
    <property type="entry name" value="ATP-cone"/>
    <property type="match status" value="1"/>
</dbReference>
<dbReference type="Pfam" id="PF22811">
    <property type="entry name" value="Zn_ribbon_NrdR"/>
    <property type="match status" value="1"/>
</dbReference>
<dbReference type="PROSITE" id="PS51161">
    <property type="entry name" value="ATP_CONE"/>
    <property type="match status" value="1"/>
</dbReference>
<feature type="chain" id="PRO_0000264175" description="Transcriptional repressor NrdR">
    <location>
        <begin position="1"/>
        <end position="149"/>
    </location>
</feature>
<feature type="domain" description="ATP-cone" evidence="1">
    <location>
        <begin position="49"/>
        <end position="139"/>
    </location>
</feature>
<feature type="zinc finger region" evidence="1">
    <location>
        <begin position="3"/>
        <end position="34"/>
    </location>
</feature>
<protein>
    <recommendedName>
        <fullName evidence="1">Transcriptional repressor NrdR</fullName>
    </recommendedName>
</protein>
<organism>
    <name type="scientific">Escherichia coli (strain UTI89 / UPEC)</name>
    <dbReference type="NCBI Taxonomy" id="364106"/>
    <lineage>
        <taxon>Bacteria</taxon>
        <taxon>Pseudomonadati</taxon>
        <taxon>Pseudomonadota</taxon>
        <taxon>Gammaproteobacteria</taxon>
        <taxon>Enterobacterales</taxon>
        <taxon>Enterobacteriaceae</taxon>
        <taxon>Escherichia</taxon>
    </lineage>
</organism>
<comment type="function">
    <text evidence="1">Negatively regulates transcription of bacterial ribonucleotide reductase nrd genes and operons by binding to NrdR-boxes.</text>
</comment>
<comment type="cofactor">
    <cofactor evidence="1">
        <name>Zn(2+)</name>
        <dbReference type="ChEBI" id="CHEBI:29105"/>
    </cofactor>
    <text evidence="1">Binds 1 zinc ion.</text>
</comment>
<comment type="similarity">
    <text evidence="1">Belongs to the NrdR family.</text>
</comment>
<name>NRDR_ECOUT</name>
<keyword id="KW-0067">ATP-binding</keyword>
<keyword id="KW-0238">DNA-binding</keyword>
<keyword id="KW-0479">Metal-binding</keyword>
<keyword id="KW-0547">Nucleotide-binding</keyword>
<keyword id="KW-0678">Repressor</keyword>
<keyword id="KW-0804">Transcription</keyword>
<keyword id="KW-0805">Transcription regulation</keyword>
<keyword id="KW-0862">Zinc</keyword>
<keyword id="KW-0863">Zinc-finger</keyword>
<proteinExistence type="inferred from homology"/>
<reference key="1">
    <citation type="journal article" date="2006" name="Proc. Natl. Acad. Sci. U.S.A.">
        <title>Identification of genes subject to positive selection in uropathogenic strains of Escherichia coli: a comparative genomics approach.</title>
        <authorList>
            <person name="Chen S.L."/>
            <person name="Hung C.-S."/>
            <person name="Xu J."/>
            <person name="Reigstad C.S."/>
            <person name="Magrini V."/>
            <person name="Sabo A."/>
            <person name="Blasiar D."/>
            <person name="Bieri T."/>
            <person name="Meyer R.R."/>
            <person name="Ozersky P."/>
            <person name="Armstrong J.R."/>
            <person name="Fulton R.S."/>
            <person name="Latreille J.P."/>
            <person name="Spieth J."/>
            <person name="Hooton T.M."/>
            <person name="Mardis E.R."/>
            <person name="Hultgren S.J."/>
            <person name="Gordon J.I."/>
        </authorList>
    </citation>
    <scope>NUCLEOTIDE SEQUENCE [LARGE SCALE GENOMIC DNA]</scope>
    <source>
        <strain>UTI89 / UPEC</strain>
    </source>
</reference>
<accession>Q1RFC8</accession>
<sequence>MHCPFCFAVDTKVIDSRLVGEGSSVRRRRQCLVCNERFTTFEVAELVMPRVVKSNDVREPFNEEKLRSGMLRALEKRPVSSDDVEMAINHIKSQLRATGEREVPSKMIGNLVMEQLKKLDKVAYIRFASVYRSFEDIKEFGEEIARLED</sequence>
<gene>
    <name evidence="1" type="primary">nrdR</name>
    <name type="ordered locus">UTI89_C0435</name>
</gene>
<evidence type="ECO:0000255" key="1">
    <source>
        <dbReference type="HAMAP-Rule" id="MF_00440"/>
    </source>
</evidence>